<comment type="function">
    <text evidence="1">Part of the ecpRABCDE operon, which encodes the E.coli common pilus (ECP). ECP is found in both commensal and pathogenic strains and plays a dual role in early-stage biofilm development and host cell recognition (By similarity).</text>
</comment>
<comment type="induction">
    <text evidence="1">Negatively regulated by H-NS. Positively regulated by IHF and EcpR (By similarity).</text>
</comment>
<comment type="similarity">
    <text evidence="3">Belongs to the EcpB/EcpE family.</text>
</comment>
<name>ECPB_ECOSM</name>
<organism>
    <name type="scientific">Escherichia coli (strain SMS-3-5 / SECEC)</name>
    <dbReference type="NCBI Taxonomy" id="439855"/>
    <lineage>
        <taxon>Bacteria</taxon>
        <taxon>Pseudomonadati</taxon>
        <taxon>Pseudomonadota</taxon>
        <taxon>Gammaproteobacteria</taxon>
        <taxon>Enterobacterales</taxon>
        <taxon>Enterobacteriaceae</taxon>
        <taxon>Escherichia</taxon>
    </lineage>
</organism>
<proteinExistence type="inferred from homology"/>
<feature type="signal peptide" evidence="2">
    <location>
        <begin position="1"/>
        <end position="20"/>
    </location>
</feature>
<feature type="chain" id="PRO_0000369158" description="Probable fimbrial chaperone EcpB">
    <location>
        <begin position="21"/>
        <end position="222"/>
    </location>
</feature>
<keyword id="KW-0143">Chaperone</keyword>
<keyword id="KW-1029">Fimbrium biogenesis</keyword>
<keyword id="KW-0732">Signal</keyword>
<sequence length="222" mass="24483">MKKHLLPLALLLSGISPAQALDVGDISSFMNSDSSTLSKTIKNSTDSGRLINIRLERLSSPLDDGQVISMDKPDELLLTPASLLLPAQASEVIRFFYKGPADEKERYYRIVWFDQALSDAQRDNANRSAVATASARIGTILVVAPRQANYHFQYANGSLTNTGNATLRILAYGPCLKAANGKECKENYYLMPGKSRRFTRVDTADNKGRVALWQGDKFIPVK</sequence>
<gene>
    <name type="primary">ecpB</name>
    <name type="synonym">matC</name>
    <name type="ordered locus">EcSMS35_0318</name>
</gene>
<dbReference type="EMBL" id="CP000970">
    <property type="protein sequence ID" value="ACB16883.1"/>
    <property type="molecule type" value="Genomic_DNA"/>
</dbReference>
<dbReference type="RefSeq" id="WP_000716409.1">
    <property type="nucleotide sequence ID" value="NC_010498.1"/>
</dbReference>
<dbReference type="SMR" id="B1LHV8"/>
<dbReference type="KEGG" id="ecm:EcSMS35_0318"/>
<dbReference type="HOGENOM" id="CLU_106652_0_0_6"/>
<dbReference type="Proteomes" id="UP000007011">
    <property type="component" value="Chromosome"/>
</dbReference>
<dbReference type="Gene3D" id="2.60.40.10">
    <property type="entry name" value="Immunoglobulins"/>
    <property type="match status" value="1"/>
</dbReference>
<dbReference type="InterPro" id="IPR040695">
    <property type="entry name" value="EcpB_C"/>
</dbReference>
<dbReference type="InterPro" id="IPR013783">
    <property type="entry name" value="Ig-like_fold"/>
</dbReference>
<dbReference type="InterPro" id="IPR008962">
    <property type="entry name" value="PapD-like_sf"/>
</dbReference>
<dbReference type="Pfam" id="PF18649">
    <property type="entry name" value="EcpB_C"/>
    <property type="match status" value="1"/>
</dbReference>
<dbReference type="SUPFAM" id="SSF49354">
    <property type="entry name" value="PapD-like"/>
    <property type="match status" value="1"/>
</dbReference>
<protein>
    <recommendedName>
        <fullName>Probable fimbrial chaperone EcpB</fullName>
    </recommendedName>
</protein>
<accession>B1LHV8</accession>
<reference key="1">
    <citation type="journal article" date="2008" name="J. Bacteriol.">
        <title>Insights into the environmental resistance gene pool from the genome sequence of the multidrug-resistant environmental isolate Escherichia coli SMS-3-5.</title>
        <authorList>
            <person name="Fricke W.F."/>
            <person name="Wright M.S."/>
            <person name="Lindell A.H."/>
            <person name="Harkins D.M."/>
            <person name="Baker-Austin C."/>
            <person name="Ravel J."/>
            <person name="Stepanauskas R."/>
        </authorList>
    </citation>
    <scope>NUCLEOTIDE SEQUENCE [LARGE SCALE GENOMIC DNA]</scope>
    <source>
        <strain>SMS-3-5 / SECEC</strain>
    </source>
</reference>
<evidence type="ECO:0000250" key="1"/>
<evidence type="ECO:0000255" key="2"/>
<evidence type="ECO:0000305" key="3"/>